<sequence>MSRINKEEVKKVAQLARLELNINEINNHAEQLEKILDYIRQLEKIDTDNVPCTTRAIEVINVFRKDEKKNYDRTEELLELGPSREDKYFKVPKIMNE</sequence>
<comment type="function">
    <text evidence="1">Allows the formation of correctly charged Asn-tRNA(Asn) or Gln-tRNA(Gln) through the transamidation of misacylated Asp-tRNA(Asn) or Glu-tRNA(Gln) in organisms which lack either or both of asparaginyl-tRNA or glutaminyl-tRNA synthetases. The reaction takes place in the presence of glutamine and ATP through an activated phospho-Asp-tRNA(Asn) or phospho-Glu-tRNA(Gln).</text>
</comment>
<comment type="catalytic activity">
    <reaction evidence="1">
        <text>L-glutamyl-tRNA(Gln) + L-glutamine + ATP + H2O = L-glutaminyl-tRNA(Gln) + L-glutamate + ADP + phosphate + H(+)</text>
        <dbReference type="Rhea" id="RHEA:17521"/>
        <dbReference type="Rhea" id="RHEA-COMP:9681"/>
        <dbReference type="Rhea" id="RHEA-COMP:9684"/>
        <dbReference type="ChEBI" id="CHEBI:15377"/>
        <dbReference type="ChEBI" id="CHEBI:15378"/>
        <dbReference type="ChEBI" id="CHEBI:29985"/>
        <dbReference type="ChEBI" id="CHEBI:30616"/>
        <dbReference type="ChEBI" id="CHEBI:43474"/>
        <dbReference type="ChEBI" id="CHEBI:58359"/>
        <dbReference type="ChEBI" id="CHEBI:78520"/>
        <dbReference type="ChEBI" id="CHEBI:78521"/>
        <dbReference type="ChEBI" id="CHEBI:456216"/>
    </reaction>
</comment>
<comment type="catalytic activity">
    <reaction evidence="1">
        <text>L-aspartyl-tRNA(Asn) + L-glutamine + ATP + H2O = L-asparaginyl-tRNA(Asn) + L-glutamate + ADP + phosphate + 2 H(+)</text>
        <dbReference type="Rhea" id="RHEA:14513"/>
        <dbReference type="Rhea" id="RHEA-COMP:9674"/>
        <dbReference type="Rhea" id="RHEA-COMP:9677"/>
        <dbReference type="ChEBI" id="CHEBI:15377"/>
        <dbReference type="ChEBI" id="CHEBI:15378"/>
        <dbReference type="ChEBI" id="CHEBI:29985"/>
        <dbReference type="ChEBI" id="CHEBI:30616"/>
        <dbReference type="ChEBI" id="CHEBI:43474"/>
        <dbReference type="ChEBI" id="CHEBI:58359"/>
        <dbReference type="ChEBI" id="CHEBI:78515"/>
        <dbReference type="ChEBI" id="CHEBI:78516"/>
        <dbReference type="ChEBI" id="CHEBI:456216"/>
    </reaction>
</comment>
<comment type="subunit">
    <text evidence="1">Heterotrimer of A, B and C subunits.</text>
</comment>
<comment type="similarity">
    <text evidence="1">Belongs to the GatC family.</text>
</comment>
<gene>
    <name evidence="1" type="primary">gatC</name>
    <name type="ordered locus">P9215_02571</name>
</gene>
<accession>A8G2P3</accession>
<reference key="1">
    <citation type="journal article" date="2007" name="PLoS Genet.">
        <title>Patterns and implications of gene gain and loss in the evolution of Prochlorococcus.</title>
        <authorList>
            <person name="Kettler G.C."/>
            <person name="Martiny A.C."/>
            <person name="Huang K."/>
            <person name="Zucker J."/>
            <person name="Coleman M.L."/>
            <person name="Rodrigue S."/>
            <person name="Chen F."/>
            <person name="Lapidus A."/>
            <person name="Ferriera S."/>
            <person name="Johnson J."/>
            <person name="Steglich C."/>
            <person name="Church G.M."/>
            <person name="Richardson P."/>
            <person name="Chisholm S.W."/>
        </authorList>
    </citation>
    <scope>NUCLEOTIDE SEQUENCE [LARGE SCALE GENOMIC DNA]</scope>
    <source>
        <strain>MIT 9215</strain>
    </source>
</reference>
<feature type="chain" id="PRO_1000057805" description="Aspartyl/glutamyl-tRNA(Asn/Gln) amidotransferase subunit C">
    <location>
        <begin position="1"/>
        <end position="97"/>
    </location>
</feature>
<evidence type="ECO:0000255" key="1">
    <source>
        <dbReference type="HAMAP-Rule" id="MF_00122"/>
    </source>
</evidence>
<proteinExistence type="inferred from homology"/>
<organism>
    <name type="scientific">Prochlorococcus marinus (strain MIT 9215)</name>
    <dbReference type="NCBI Taxonomy" id="93060"/>
    <lineage>
        <taxon>Bacteria</taxon>
        <taxon>Bacillati</taxon>
        <taxon>Cyanobacteriota</taxon>
        <taxon>Cyanophyceae</taxon>
        <taxon>Synechococcales</taxon>
        <taxon>Prochlorococcaceae</taxon>
        <taxon>Prochlorococcus</taxon>
    </lineage>
</organism>
<dbReference type="EC" id="6.3.5.-" evidence="1"/>
<dbReference type="EMBL" id="CP000825">
    <property type="protein sequence ID" value="ABV49874.1"/>
    <property type="molecule type" value="Genomic_DNA"/>
</dbReference>
<dbReference type="RefSeq" id="WP_002807675.1">
    <property type="nucleotide sequence ID" value="NC_009840.1"/>
</dbReference>
<dbReference type="SMR" id="A8G2P3"/>
<dbReference type="STRING" id="93060.P9215_02571"/>
<dbReference type="KEGG" id="pmh:P9215_02571"/>
<dbReference type="eggNOG" id="COG0721">
    <property type="taxonomic scope" value="Bacteria"/>
</dbReference>
<dbReference type="HOGENOM" id="CLU_105899_1_2_3"/>
<dbReference type="OrthoDB" id="9813938at2"/>
<dbReference type="Proteomes" id="UP000002014">
    <property type="component" value="Chromosome"/>
</dbReference>
<dbReference type="GO" id="GO:0050566">
    <property type="term" value="F:asparaginyl-tRNA synthase (glutamine-hydrolyzing) activity"/>
    <property type="evidence" value="ECO:0007669"/>
    <property type="project" value="RHEA"/>
</dbReference>
<dbReference type="GO" id="GO:0005524">
    <property type="term" value="F:ATP binding"/>
    <property type="evidence" value="ECO:0007669"/>
    <property type="project" value="UniProtKB-KW"/>
</dbReference>
<dbReference type="GO" id="GO:0050567">
    <property type="term" value="F:glutaminyl-tRNA synthase (glutamine-hydrolyzing) activity"/>
    <property type="evidence" value="ECO:0007669"/>
    <property type="project" value="UniProtKB-UniRule"/>
</dbReference>
<dbReference type="GO" id="GO:0070681">
    <property type="term" value="P:glutaminyl-tRNAGln biosynthesis via transamidation"/>
    <property type="evidence" value="ECO:0007669"/>
    <property type="project" value="TreeGrafter"/>
</dbReference>
<dbReference type="GO" id="GO:0006450">
    <property type="term" value="P:regulation of translational fidelity"/>
    <property type="evidence" value="ECO:0007669"/>
    <property type="project" value="InterPro"/>
</dbReference>
<dbReference type="GO" id="GO:0006412">
    <property type="term" value="P:translation"/>
    <property type="evidence" value="ECO:0007669"/>
    <property type="project" value="UniProtKB-UniRule"/>
</dbReference>
<dbReference type="Gene3D" id="1.10.20.60">
    <property type="entry name" value="Glu-tRNAGln amidotransferase C subunit, N-terminal domain"/>
    <property type="match status" value="1"/>
</dbReference>
<dbReference type="HAMAP" id="MF_00122">
    <property type="entry name" value="GatC"/>
    <property type="match status" value="1"/>
</dbReference>
<dbReference type="InterPro" id="IPR036113">
    <property type="entry name" value="Asp/Glu-ADT_sf_sub_c"/>
</dbReference>
<dbReference type="InterPro" id="IPR003837">
    <property type="entry name" value="GatC"/>
</dbReference>
<dbReference type="NCBIfam" id="TIGR00135">
    <property type="entry name" value="gatC"/>
    <property type="match status" value="1"/>
</dbReference>
<dbReference type="PANTHER" id="PTHR15004">
    <property type="entry name" value="GLUTAMYL-TRNA(GLN) AMIDOTRANSFERASE SUBUNIT C, MITOCHONDRIAL"/>
    <property type="match status" value="1"/>
</dbReference>
<dbReference type="PANTHER" id="PTHR15004:SF0">
    <property type="entry name" value="GLUTAMYL-TRNA(GLN) AMIDOTRANSFERASE SUBUNIT C, MITOCHONDRIAL"/>
    <property type="match status" value="1"/>
</dbReference>
<dbReference type="Pfam" id="PF02686">
    <property type="entry name" value="GatC"/>
    <property type="match status" value="1"/>
</dbReference>
<dbReference type="SUPFAM" id="SSF141000">
    <property type="entry name" value="Glu-tRNAGln amidotransferase C subunit"/>
    <property type="match status" value="1"/>
</dbReference>
<name>GATC_PROM2</name>
<protein>
    <recommendedName>
        <fullName evidence="1">Aspartyl/glutamyl-tRNA(Asn/Gln) amidotransferase subunit C</fullName>
        <shortName evidence="1">Asp/Glu-ADT subunit C</shortName>
        <ecNumber evidence="1">6.3.5.-</ecNumber>
    </recommendedName>
</protein>
<keyword id="KW-0067">ATP-binding</keyword>
<keyword id="KW-0436">Ligase</keyword>
<keyword id="KW-0547">Nucleotide-binding</keyword>
<keyword id="KW-0648">Protein biosynthesis</keyword>